<gene>
    <name evidence="1" type="primary">rlmH</name>
    <name type="ordered locus">RALTA_A0854</name>
</gene>
<keyword id="KW-0963">Cytoplasm</keyword>
<keyword id="KW-0489">Methyltransferase</keyword>
<keyword id="KW-0698">rRNA processing</keyword>
<keyword id="KW-0949">S-adenosyl-L-methionine</keyword>
<keyword id="KW-0808">Transferase</keyword>
<name>RLMH_CUPTR</name>
<comment type="function">
    <text evidence="1">Specifically methylates the pseudouridine at position 1915 (m3Psi1915) in 23S rRNA.</text>
</comment>
<comment type="catalytic activity">
    <reaction evidence="1">
        <text>pseudouridine(1915) in 23S rRNA + S-adenosyl-L-methionine = N(3)-methylpseudouridine(1915) in 23S rRNA + S-adenosyl-L-homocysteine + H(+)</text>
        <dbReference type="Rhea" id="RHEA:42752"/>
        <dbReference type="Rhea" id="RHEA-COMP:10221"/>
        <dbReference type="Rhea" id="RHEA-COMP:10222"/>
        <dbReference type="ChEBI" id="CHEBI:15378"/>
        <dbReference type="ChEBI" id="CHEBI:57856"/>
        <dbReference type="ChEBI" id="CHEBI:59789"/>
        <dbReference type="ChEBI" id="CHEBI:65314"/>
        <dbReference type="ChEBI" id="CHEBI:74486"/>
        <dbReference type="EC" id="2.1.1.177"/>
    </reaction>
</comment>
<comment type="subunit">
    <text evidence="1">Homodimer.</text>
</comment>
<comment type="subcellular location">
    <subcellularLocation>
        <location evidence="1">Cytoplasm</location>
    </subcellularLocation>
</comment>
<comment type="similarity">
    <text evidence="1">Belongs to the RNA methyltransferase RlmH family.</text>
</comment>
<dbReference type="EC" id="2.1.1.177" evidence="1"/>
<dbReference type="EMBL" id="CU633749">
    <property type="protein sequence ID" value="CAQ68821.1"/>
    <property type="molecule type" value="Genomic_DNA"/>
</dbReference>
<dbReference type="RefSeq" id="WP_011614787.1">
    <property type="nucleotide sequence ID" value="NC_010528.1"/>
</dbReference>
<dbReference type="SMR" id="B3R3D9"/>
<dbReference type="GeneID" id="34311027"/>
<dbReference type="KEGG" id="cti:RALTA_A0854"/>
<dbReference type="eggNOG" id="COG1576">
    <property type="taxonomic scope" value="Bacteria"/>
</dbReference>
<dbReference type="HOGENOM" id="CLU_100552_1_0_4"/>
<dbReference type="BioCyc" id="CTAI977880:RALTA_RS04055-MONOMER"/>
<dbReference type="Proteomes" id="UP000001692">
    <property type="component" value="Chromosome 1"/>
</dbReference>
<dbReference type="GO" id="GO:0005737">
    <property type="term" value="C:cytoplasm"/>
    <property type="evidence" value="ECO:0007669"/>
    <property type="project" value="UniProtKB-SubCell"/>
</dbReference>
<dbReference type="GO" id="GO:0070038">
    <property type="term" value="F:rRNA (pseudouridine-N3-)-methyltransferase activity"/>
    <property type="evidence" value="ECO:0007669"/>
    <property type="project" value="UniProtKB-UniRule"/>
</dbReference>
<dbReference type="CDD" id="cd18081">
    <property type="entry name" value="RlmH-like"/>
    <property type="match status" value="1"/>
</dbReference>
<dbReference type="Gene3D" id="3.40.1280.10">
    <property type="match status" value="1"/>
</dbReference>
<dbReference type="HAMAP" id="MF_00658">
    <property type="entry name" value="23SrRNA_methyltr_H"/>
    <property type="match status" value="1"/>
</dbReference>
<dbReference type="InterPro" id="IPR029028">
    <property type="entry name" value="Alpha/beta_knot_MTases"/>
</dbReference>
<dbReference type="InterPro" id="IPR003742">
    <property type="entry name" value="RlmH-like"/>
</dbReference>
<dbReference type="InterPro" id="IPR029026">
    <property type="entry name" value="tRNA_m1G_MTases_N"/>
</dbReference>
<dbReference type="NCBIfam" id="NF000986">
    <property type="entry name" value="PRK00103.1-4"/>
    <property type="match status" value="1"/>
</dbReference>
<dbReference type="NCBIfam" id="TIGR00246">
    <property type="entry name" value="tRNA_RlmH_YbeA"/>
    <property type="match status" value="1"/>
</dbReference>
<dbReference type="PANTHER" id="PTHR33603">
    <property type="entry name" value="METHYLTRANSFERASE"/>
    <property type="match status" value="1"/>
</dbReference>
<dbReference type="PANTHER" id="PTHR33603:SF1">
    <property type="entry name" value="RIBOSOMAL RNA LARGE SUBUNIT METHYLTRANSFERASE H"/>
    <property type="match status" value="1"/>
</dbReference>
<dbReference type="Pfam" id="PF02590">
    <property type="entry name" value="SPOUT_MTase"/>
    <property type="match status" value="1"/>
</dbReference>
<dbReference type="PIRSF" id="PIRSF004505">
    <property type="entry name" value="MT_bac"/>
    <property type="match status" value="1"/>
</dbReference>
<dbReference type="SUPFAM" id="SSF75217">
    <property type="entry name" value="alpha/beta knot"/>
    <property type="match status" value="1"/>
</dbReference>
<organism>
    <name type="scientific">Cupriavidus taiwanensis (strain DSM 17343 / BCRC 17206 / CCUG 44338 / CIP 107171 / LMG 19424 / R1)</name>
    <name type="common">Ralstonia taiwanensis (strain LMG 19424)</name>
    <dbReference type="NCBI Taxonomy" id="977880"/>
    <lineage>
        <taxon>Bacteria</taxon>
        <taxon>Pseudomonadati</taxon>
        <taxon>Pseudomonadota</taxon>
        <taxon>Betaproteobacteria</taxon>
        <taxon>Burkholderiales</taxon>
        <taxon>Burkholderiaceae</taxon>
        <taxon>Cupriavidus</taxon>
    </lineage>
</organism>
<reference key="1">
    <citation type="journal article" date="2008" name="Genome Res.">
        <title>Genome sequence of the beta-rhizobium Cupriavidus taiwanensis and comparative genomics of rhizobia.</title>
        <authorList>
            <person name="Amadou C."/>
            <person name="Pascal G."/>
            <person name="Mangenot S."/>
            <person name="Glew M."/>
            <person name="Bontemps C."/>
            <person name="Capela D."/>
            <person name="Carrere S."/>
            <person name="Cruveiller S."/>
            <person name="Dossat C."/>
            <person name="Lajus A."/>
            <person name="Marchetti M."/>
            <person name="Poinsot V."/>
            <person name="Rouy Z."/>
            <person name="Servin B."/>
            <person name="Saad M."/>
            <person name="Schenowitz C."/>
            <person name="Barbe V."/>
            <person name="Batut J."/>
            <person name="Medigue C."/>
            <person name="Masson-Boivin C."/>
        </authorList>
    </citation>
    <scope>NUCLEOTIDE SEQUENCE [LARGE SCALE GENOMIC DNA]</scope>
    <source>
        <strain>DSM 17343 / BCRC 17206 / CCUG 44338 / CIP 107171 / LMG 19424 / R1</strain>
    </source>
</reference>
<proteinExistence type="inferred from homology"/>
<accession>B3R3D9</accession>
<sequence>MQLVIVAVGHKMPGWIETGFSEYAKRMPPELRIELREVKPETRSSSNNAATVMQREAARIEAVLGSLSKQCRIVALDERGRDFTTVQLAAQLTDWQREGGDVAFLIGGADGLDPALKARASTLIRLSSLTLPHGMVRVLLAEQLYRAWSVTQNHPYHRA</sequence>
<evidence type="ECO:0000255" key="1">
    <source>
        <dbReference type="HAMAP-Rule" id="MF_00658"/>
    </source>
</evidence>
<protein>
    <recommendedName>
        <fullName evidence="1">Ribosomal RNA large subunit methyltransferase H</fullName>
        <ecNumber evidence="1">2.1.1.177</ecNumber>
    </recommendedName>
    <alternativeName>
        <fullName evidence="1">23S rRNA (pseudouridine1915-N3)-methyltransferase</fullName>
    </alternativeName>
    <alternativeName>
        <fullName evidence="1">23S rRNA m3Psi1915 methyltransferase</fullName>
    </alternativeName>
    <alternativeName>
        <fullName evidence="1">rRNA (pseudouridine-N3-)-methyltransferase RlmH</fullName>
    </alternativeName>
</protein>
<feature type="chain" id="PRO_0000366586" description="Ribosomal RNA large subunit methyltransferase H">
    <location>
        <begin position="1"/>
        <end position="159"/>
    </location>
</feature>
<feature type="binding site" evidence="1">
    <location>
        <position position="76"/>
    </location>
    <ligand>
        <name>S-adenosyl-L-methionine</name>
        <dbReference type="ChEBI" id="CHEBI:59789"/>
    </ligand>
</feature>
<feature type="binding site" evidence="1">
    <location>
        <position position="107"/>
    </location>
    <ligand>
        <name>S-adenosyl-L-methionine</name>
        <dbReference type="ChEBI" id="CHEBI:59789"/>
    </ligand>
</feature>
<feature type="binding site" evidence="1">
    <location>
        <begin position="126"/>
        <end position="131"/>
    </location>
    <ligand>
        <name>S-adenosyl-L-methionine</name>
        <dbReference type="ChEBI" id="CHEBI:59789"/>
    </ligand>
</feature>